<protein>
    <recommendedName>
        <fullName evidence="1">Protein PsbN</fullName>
    </recommendedName>
</protein>
<reference key="1">
    <citation type="journal article" date="2000" name="Nature">
        <title>Ancestral chloroplast genome in Mesostigma viride reveals an early branch of green plant evolution.</title>
        <authorList>
            <person name="Lemieux C."/>
            <person name="Otis C."/>
            <person name="Turmel M."/>
        </authorList>
    </citation>
    <scope>NUCLEOTIDE SEQUENCE [LARGE SCALE GENOMIC DNA]</scope>
    <source>
        <strain>NIES-296 / KY-14 / CCMP 2046</strain>
    </source>
</reference>
<evidence type="ECO:0000255" key="1">
    <source>
        <dbReference type="HAMAP-Rule" id="MF_00293"/>
    </source>
</evidence>
<dbReference type="EMBL" id="AF166114">
    <property type="protein sequence ID" value="AAF43796.1"/>
    <property type="molecule type" value="Genomic_DNA"/>
</dbReference>
<dbReference type="RefSeq" id="NP_038355.1">
    <property type="nucleotide sequence ID" value="NC_002186.1"/>
</dbReference>
<dbReference type="GeneID" id="800934"/>
<dbReference type="GO" id="GO:0009535">
    <property type="term" value="C:chloroplast thylakoid membrane"/>
    <property type="evidence" value="ECO:0007669"/>
    <property type="project" value="UniProtKB-SubCell"/>
</dbReference>
<dbReference type="GO" id="GO:0015979">
    <property type="term" value="P:photosynthesis"/>
    <property type="evidence" value="ECO:0007669"/>
    <property type="project" value="InterPro"/>
</dbReference>
<dbReference type="HAMAP" id="MF_00293">
    <property type="entry name" value="PSII_PsbN"/>
    <property type="match status" value="1"/>
</dbReference>
<dbReference type="InterPro" id="IPR003398">
    <property type="entry name" value="PSII_PsbN"/>
</dbReference>
<dbReference type="PANTHER" id="PTHR35326">
    <property type="entry name" value="PROTEIN PSBN"/>
    <property type="match status" value="1"/>
</dbReference>
<dbReference type="PANTHER" id="PTHR35326:SF3">
    <property type="entry name" value="PROTEIN PSBN"/>
    <property type="match status" value="1"/>
</dbReference>
<dbReference type="Pfam" id="PF02468">
    <property type="entry name" value="PsbN"/>
    <property type="match status" value="1"/>
</dbReference>
<proteinExistence type="inferred from homology"/>
<sequence>METATIFSIFFSCLLIGLTGYSLYTSFGNASSELRDPFEEHED</sequence>
<name>PSBN_MESVI</name>
<feature type="chain" id="PRO_0000207923" description="Protein PsbN">
    <location>
        <begin position="1"/>
        <end position="43"/>
    </location>
</feature>
<feature type="transmembrane region" description="Helical" evidence="1">
    <location>
        <begin position="5"/>
        <end position="27"/>
    </location>
</feature>
<accession>Q9MUV5</accession>
<comment type="function">
    <text evidence="1">May play a role in photosystem I and II biogenesis.</text>
</comment>
<comment type="subcellular location">
    <subcellularLocation>
        <location evidence="1">Plastid</location>
        <location evidence="1">Chloroplast thylakoid membrane</location>
        <topology evidence="1">Single-pass membrane protein</topology>
    </subcellularLocation>
</comment>
<comment type="similarity">
    <text evidence="1">Belongs to the PsbN family.</text>
</comment>
<comment type="caution">
    <text evidence="1">Originally thought to be a component of PSII; based on experiments in Synechocystis, N.tabacum and barley, and its absence from PSII in T.elongatus and T.vulcanus, this is probably not true.</text>
</comment>
<gene>
    <name evidence="1" type="primary">psbN</name>
</gene>
<geneLocation type="chloroplast"/>
<organism>
    <name type="scientific">Mesostigma viride</name>
    <name type="common">Green alga</name>
    <dbReference type="NCBI Taxonomy" id="41882"/>
    <lineage>
        <taxon>Eukaryota</taxon>
        <taxon>Viridiplantae</taxon>
        <taxon>Streptophyta</taxon>
        <taxon>Mesostigmatophyceae</taxon>
        <taxon>Mesostigmatales</taxon>
        <taxon>Mesostigmataceae</taxon>
        <taxon>Mesostigma</taxon>
    </lineage>
</organism>
<keyword id="KW-0150">Chloroplast</keyword>
<keyword id="KW-0472">Membrane</keyword>
<keyword id="KW-0934">Plastid</keyword>
<keyword id="KW-0793">Thylakoid</keyword>
<keyword id="KW-0812">Transmembrane</keyword>
<keyword id="KW-1133">Transmembrane helix</keyword>